<organism>
    <name type="scientific">Escherichia coli O7:K1 (strain IAI39 / ExPEC)</name>
    <dbReference type="NCBI Taxonomy" id="585057"/>
    <lineage>
        <taxon>Bacteria</taxon>
        <taxon>Pseudomonadati</taxon>
        <taxon>Pseudomonadota</taxon>
        <taxon>Gammaproteobacteria</taxon>
        <taxon>Enterobacterales</taxon>
        <taxon>Enterobacteriaceae</taxon>
        <taxon>Escherichia</taxon>
    </lineage>
</organism>
<dbReference type="EC" id="2.1.1.176" evidence="1"/>
<dbReference type="EMBL" id="CU928164">
    <property type="protein sequence ID" value="CAR19897.1"/>
    <property type="molecule type" value="Genomic_DNA"/>
</dbReference>
<dbReference type="RefSeq" id="WP_001329571.1">
    <property type="nucleotide sequence ID" value="NC_011750.1"/>
</dbReference>
<dbReference type="RefSeq" id="YP_002409680.1">
    <property type="nucleotide sequence ID" value="NC_011750.1"/>
</dbReference>
<dbReference type="SMR" id="B7NLK8"/>
<dbReference type="STRING" id="585057.ECIAI39_3783"/>
<dbReference type="KEGG" id="ect:ECIAI39_3783"/>
<dbReference type="PATRIC" id="fig|585057.6.peg.3920"/>
<dbReference type="HOGENOM" id="CLU_005316_0_4_6"/>
<dbReference type="Proteomes" id="UP000000749">
    <property type="component" value="Chromosome"/>
</dbReference>
<dbReference type="GO" id="GO:0005829">
    <property type="term" value="C:cytosol"/>
    <property type="evidence" value="ECO:0007669"/>
    <property type="project" value="TreeGrafter"/>
</dbReference>
<dbReference type="GO" id="GO:0003723">
    <property type="term" value="F:RNA binding"/>
    <property type="evidence" value="ECO:0007669"/>
    <property type="project" value="UniProtKB-KW"/>
</dbReference>
<dbReference type="GO" id="GO:0009383">
    <property type="term" value="F:rRNA (cytosine-C5-)-methyltransferase activity"/>
    <property type="evidence" value="ECO:0007669"/>
    <property type="project" value="TreeGrafter"/>
</dbReference>
<dbReference type="GO" id="GO:0006355">
    <property type="term" value="P:regulation of DNA-templated transcription"/>
    <property type="evidence" value="ECO:0007669"/>
    <property type="project" value="InterPro"/>
</dbReference>
<dbReference type="GO" id="GO:0070475">
    <property type="term" value="P:rRNA base methylation"/>
    <property type="evidence" value="ECO:0007669"/>
    <property type="project" value="TreeGrafter"/>
</dbReference>
<dbReference type="CDD" id="cd02440">
    <property type="entry name" value="AdoMet_MTases"/>
    <property type="match status" value="1"/>
</dbReference>
<dbReference type="CDD" id="cd00620">
    <property type="entry name" value="Methyltransferase_Sun"/>
    <property type="match status" value="1"/>
</dbReference>
<dbReference type="FunFam" id="1.10.287.730:FF:000001">
    <property type="entry name" value="Ribosomal RNA small subunit methyltransferase B"/>
    <property type="match status" value="1"/>
</dbReference>
<dbReference type="FunFam" id="1.10.940.10:FF:000002">
    <property type="entry name" value="Ribosomal RNA small subunit methyltransferase B"/>
    <property type="match status" value="1"/>
</dbReference>
<dbReference type="FunFam" id="3.30.70.1170:FF:000002">
    <property type="entry name" value="Ribosomal RNA small subunit methyltransferase B"/>
    <property type="match status" value="1"/>
</dbReference>
<dbReference type="FunFam" id="3.40.50.150:FF:000022">
    <property type="entry name" value="Ribosomal RNA small subunit methyltransferase B"/>
    <property type="match status" value="1"/>
</dbReference>
<dbReference type="Gene3D" id="1.10.287.730">
    <property type="entry name" value="Helix hairpin bin"/>
    <property type="match status" value="1"/>
</dbReference>
<dbReference type="Gene3D" id="1.10.940.10">
    <property type="entry name" value="NusB-like"/>
    <property type="match status" value="1"/>
</dbReference>
<dbReference type="Gene3D" id="3.30.70.1170">
    <property type="entry name" value="Sun protein, domain 3"/>
    <property type="match status" value="1"/>
</dbReference>
<dbReference type="Gene3D" id="3.40.50.150">
    <property type="entry name" value="Vaccinia Virus protein VP39"/>
    <property type="match status" value="1"/>
</dbReference>
<dbReference type="HAMAP" id="MF_01856">
    <property type="entry name" value="16SrRNA_methyltr_B"/>
    <property type="match status" value="1"/>
</dbReference>
<dbReference type="InterPro" id="IPR049560">
    <property type="entry name" value="MeTrfase_RsmB-F_NOP2_cat"/>
</dbReference>
<dbReference type="InterPro" id="IPR001678">
    <property type="entry name" value="MeTrfase_RsmB-F_NOP2_dom"/>
</dbReference>
<dbReference type="InterPro" id="IPR035926">
    <property type="entry name" value="NusB-like_sf"/>
</dbReference>
<dbReference type="InterPro" id="IPR006027">
    <property type="entry name" value="NusB_RsmB_TIM44"/>
</dbReference>
<dbReference type="InterPro" id="IPR023267">
    <property type="entry name" value="RCMT"/>
</dbReference>
<dbReference type="InterPro" id="IPR004573">
    <property type="entry name" value="rRNA_ssu_MeTfrase_B"/>
</dbReference>
<dbReference type="InterPro" id="IPR023541">
    <property type="entry name" value="rRNA_ssu_MeTfrase_B_ent"/>
</dbReference>
<dbReference type="InterPro" id="IPR054728">
    <property type="entry name" value="RsmB-like_ferredoxin"/>
</dbReference>
<dbReference type="InterPro" id="IPR048019">
    <property type="entry name" value="RsmB-like_N"/>
</dbReference>
<dbReference type="InterPro" id="IPR018314">
    <property type="entry name" value="RsmB/NOL1/NOP2-like_CS"/>
</dbReference>
<dbReference type="InterPro" id="IPR029063">
    <property type="entry name" value="SAM-dependent_MTases_sf"/>
</dbReference>
<dbReference type="NCBIfam" id="NF008149">
    <property type="entry name" value="PRK10901.1"/>
    <property type="match status" value="1"/>
</dbReference>
<dbReference type="NCBIfam" id="NF011494">
    <property type="entry name" value="PRK14902.1"/>
    <property type="match status" value="1"/>
</dbReference>
<dbReference type="NCBIfam" id="TIGR00563">
    <property type="entry name" value="rsmB"/>
    <property type="match status" value="1"/>
</dbReference>
<dbReference type="PANTHER" id="PTHR22807:SF61">
    <property type="entry name" value="NOL1_NOP2_SUN FAMILY PROTEIN _ ANTITERMINATION NUSB DOMAIN-CONTAINING PROTEIN"/>
    <property type="match status" value="1"/>
</dbReference>
<dbReference type="PANTHER" id="PTHR22807">
    <property type="entry name" value="NOP2 YEAST -RELATED NOL1/NOP2/FMU SUN DOMAIN-CONTAINING"/>
    <property type="match status" value="1"/>
</dbReference>
<dbReference type="Pfam" id="PF01189">
    <property type="entry name" value="Methyltr_RsmB-F"/>
    <property type="match status" value="1"/>
</dbReference>
<dbReference type="Pfam" id="PF01029">
    <property type="entry name" value="NusB"/>
    <property type="match status" value="1"/>
</dbReference>
<dbReference type="Pfam" id="PF22458">
    <property type="entry name" value="RsmF-B_ferredox"/>
    <property type="match status" value="1"/>
</dbReference>
<dbReference type="PRINTS" id="PR02008">
    <property type="entry name" value="RCMTFAMILY"/>
</dbReference>
<dbReference type="SUPFAM" id="SSF48013">
    <property type="entry name" value="NusB-like"/>
    <property type="match status" value="1"/>
</dbReference>
<dbReference type="SUPFAM" id="SSF53335">
    <property type="entry name" value="S-adenosyl-L-methionine-dependent methyltransferases"/>
    <property type="match status" value="1"/>
</dbReference>
<dbReference type="PROSITE" id="PS01153">
    <property type="entry name" value="NOL1_NOP2_SUN"/>
    <property type="match status" value="1"/>
</dbReference>
<dbReference type="PROSITE" id="PS51686">
    <property type="entry name" value="SAM_MT_RSMB_NOP"/>
    <property type="match status" value="1"/>
</dbReference>
<protein>
    <recommendedName>
        <fullName evidence="1">Ribosomal RNA small subunit methyltransferase B</fullName>
        <ecNumber evidence="1">2.1.1.176</ecNumber>
    </recommendedName>
    <alternativeName>
        <fullName evidence="1">16S rRNA m5C967 methyltransferase</fullName>
    </alternativeName>
    <alternativeName>
        <fullName evidence="1">rRNA (cytosine-C(5)-)-methyltransferase RsmB</fullName>
    </alternativeName>
</protein>
<evidence type="ECO:0000255" key="1">
    <source>
        <dbReference type="HAMAP-Rule" id="MF_01856"/>
    </source>
</evidence>
<keyword id="KW-0963">Cytoplasm</keyword>
<keyword id="KW-0489">Methyltransferase</keyword>
<keyword id="KW-0694">RNA-binding</keyword>
<keyword id="KW-0698">rRNA processing</keyword>
<keyword id="KW-0949">S-adenosyl-L-methionine</keyword>
<keyword id="KW-0808">Transferase</keyword>
<reference key="1">
    <citation type="journal article" date="2009" name="PLoS Genet.">
        <title>Organised genome dynamics in the Escherichia coli species results in highly diverse adaptive paths.</title>
        <authorList>
            <person name="Touchon M."/>
            <person name="Hoede C."/>
            <person name="Tenaillon O."/>
            <person name="Barbe V."/>
            <person name="Baeriswyl S."/>
            <person name="Bidet P."/>
            <person name="Bingen E."/>
            <person name="Bonacorsi S."/>
            <person name="Bouchier C."/>
            <person name="Bouvet O."/>
            <person name="Calteau A."/>
            <person name="Chiapello H."/>
            <person name="Clermont O."/>
            <person name="Cruveiller S."/>
            <person name="Danchin A."/>
            <person name="Diard M."/>
            <person name="Dossat C."/>
            <person name="Karoui M.E."/>
            <person name="Frapy E."/>
            <person name="Garry L."/>
            <person name="Ghigo J.M."/>
            <person name="Gilles A.M."/>
            <person name="Johnson J."/>
            <person name="Le Bouguenec C."/>
            <person name="Lescat M."/>
            <person name="Mangenot S."/>
            <person name="Martinez-Jehanne V."/>
            <person name="Matic I."/>
            <person name="Nassif X."/>
            <person name="Oztas S."/>
            <person name="Petit M.A."/>
            <person name="Pichon C."/>
            <person name="Rouy Z."/>
            <person name="Ruf C.S."/>
            <person name="Schneider D."/>
            <person name="Tourret J."/>
            <person name="Vacherie B."/>
            <person name="Vallenet D."/>
            <person name="Medigue C."/>
            <person name="Rocha E.P.C."/>
            <person name="Denamur E."/>
        </authorList>
    </citation>
    <scope>NUCLEOTIDE SEQUENCE [LARGE SCALE GENOMIC DNA]</scope>
    <source>
        <strain>IAI39 / ExPEC</strain>
    </source>
</reference>
<name>RSMB_ECO7I</name>
<accession>B7NLK8</accession>
<comment type="function">
    <text evidence="1">Specifically methylates the cytosine at position 967 (m5C967) of 16S rRNA.</text>
</comment>
<comment type="catalytic activity">
    <reaction evidence="1">
        <text>cytidine(967) in 16S rRNA + S-adenosyl-L-methionine = 5-methylcytidine(967) in 16S rRNA + S-adenosyl-L-homocysteine + H(+)</text>
        <dbReference type="Rhea" id="RHEA:42748"/>
        <dbReference type="Rhea" id="RHEA-COMP:10219"/>
        <dbReference type="Rhea" id="RHEA-COMP:10220"/>
        <dbReference type="ChEBI" id="CHEBI:15378"/>
        <dbReference type="ChEBI" id="CHEBI:57856"/>
        <dbReference type="ChEBI" id="CHEBI:59789"/>
        <dbReference type="ChEBI" id="CHEBI:74483"/>
        <dbReference type="ChEBI" id="CHEBI:82748"/>
        <dbReference type="EC" id="2.1.1.176"/>
    </reaction>
</comment>
<comment type="subcellular location">
    <subcellularLocation>
        <location evidence="1">Cytoplasm</location>
    </subcellularLocation>
</comment>
<comment type="similarity">
    <text evidence="1">Belongs to the class I-like SAM-binding methyltransferase superfamily. RsmB/NOP family.</text>
</comment>
<sequence length="429" mass="48291">MKKQRNLRSMAAQAVEQVVEQGQSLSNILPPLQQKVSDKDKALLQELCFGVLRTLSQLDWLINKLMARPMTGKQRTVHYLIMVGLYQLLYTRIPPHAALAETVEGAVAIKRPQLKGLINGVLRQFQRQQDELLAEFNASDARYLHPSWLLKRLQKAYPEQWQSIVEANNQRPPMWLRVNRTHHSRDSWLALLDEAGMKGFPHADYPDAVQLETPAPVHALPGFEEGWVTVQDASAQGCMTWLAPQNGEHILDLCAAPGGKTTHILEVAPEAQVLAVDIDEQRLSRVYDNLKRLGMKATVKQGDGRYPSQWCGEQQFDRILLDAPCSATGVIRRHPDIKWLRRDRDIPELAQLQSEILDAIWPHLKSGGTLVYATCSVLPEENSLQIKAFLQRTADAELCETGTPEQPGKQNLPGAEEGDGFFYAKLIKK</sequence>
<feature type="chain" id="PRO_1000188691" description="Ribosomal RNA small subunit methyltransferase B">
    <location>
        <begin position="1"/>
        <end position="429"/>
    </location>
</feature>
<feature type="active site" description="Nucleophile" evidence="1">
    <location>
        <position position="375"/>
    </location>
</feature>
<feature type="binding site" evidence="1">
    <location>
        <begin position="254"/>
        <end position="260"/>
    </location>
    <ligand>
        <name>S-adenosyl-L-methionine</name>
        <dbReference type="ChEBI" id="CHEBI:59789"/>
    </ligand>
</feature>
<feature type="binding site" evidence="1">
    <location>
        <position position="277"/>
    </location>
    <ligand>
        <name>S-adenosyl-L-methionine</name>
        <dbReference type="ChEBI" id="CHEBI:59789"/>
    </ligand>
</feature>
<feature type="binding site" evidence="1">
    <location>
        <position position="303"/>
    </location>
    <ligand>
        <name>S-adenosyl-L-methionine</name>
        <dbReference type="ChEBI" id="CHEBI:59789"/>
    </ligand>
</feature>
<feature type="binding site" evidence="1">
    <location>
        <position position="322"/>
    </location>
    <ligand>
        <name>S-adenosyl-L-methionine</name>
        <dbReference type="ChEBI" id="CHEBI:59789"/>
    </ligand>
</feature>
<gene>
    <name evidence="1" type="primary">rsmB</name>
    <name evidence="1" type="synonym">sun</name>
    <name type="ordered locus">ECIAI39_3783</name>
</gene>
<proteinExistence type="inferred from homology"/>